<organism>
    <name type="scientific">Xenopus laevis</name>
    <name type="common">African clawed frog</name>
    <dbReference type="NCBI Taxonomy" id="8355"/>
    <lineage>
        <taxon>Eukaryota</taxon>
        <taxon>Metazoa</taxon>
        <taxon>Chordata</taxon>
        <taxon>Craniata</taxon>
        <taxon>Vertebrata</taxon>
        <taxon>Euteleostomi</taxon>
        <taxon>Amphibia</taxon>
        <taxon>Batrachia</taxon>
        <taxon>Anura</taxon>
        <taxon>Pipoidea</taxon>
        <taxon>Pipidae</taxon>
        <taxon>Xenopodinae</taxon>
        <taxon>Xenopus</taxon>
        <taxon>Xenopus</taxon>
    </lineage>
</organism>
<feature type="signal peptide" evidence="4">
    <location>
        <begin position="1"/>
        <end position="22"/>
    </location>
</feature>
<feature type="chain" id="PRO_0000012989" description="Frizzled-4">
    <location>
        <begin position="23"/>
        <end position="523"/>
    </location>
</feature>
<feature type="topological domain" description="Extracellular" evidence="3">
    <location>
        <begin position="23"/>
        <end position="198"/>
    </location>
</feature>
<feature type="transmembrane region" description="Helical; Name=1" evidence="3">
    <location>
        <begin position="199"/>
        <end position="229"/>
    </location>
</feature>
<feature type="topological domain" description="Cytoplasmic" evidence="3">
    <location>
        <begin position="230"/>
        <end position="235"/>
    </location>
</feature>
<feature type="transmembrane region" description="Helical; Name=2" evidence="3">
    <location>
        <begin position="236"/>
        <end position="261"/>
    </location>
</feature>
<feature type="topological domain" description="Extracellular" evidence="3">
    <location>
        <begin position="262"/>
        <end position="285"/>
    </location>
</feature>
<feature type="transmembrane region" description="Helical; Name=3" evidence="3">
    <location>
        <begin position="286"/>
        <end position="319"/>
    </location>
</feature>
<feature type="topological domain" description="Cytoplasmic" evidence="3">
    <location>
        <begin position="320"/>
        <end position="322"/>
    </location>
</feature>
<feature type="transmembrane region" description="Helical; Name=4" evidence="3">
    <location>
        <begin position="323"/>
        <end position="351"/>
    </location>
</feature>
<feature type="topological domain" description="Extracellular" evidence="3">
    <location>
        <begin position="352"/>
        <end position="369"/>
    </location>
</feature>
<feature type="transmembrane region" description="Helical; Name=5" evidence="3">
    <location>
        <begin position="370"/>
        <end position="396"/>
    </location>
</feature>
<feature type="topological domain" description="Cytoplasmic" evidence="3">
    <location>
        <begin position="397"/>
        <end position="417"/>
    </location>
</feature>
<feature type="transmembrane region" description="Helical; Name=6" evidence="3">
    <location>
        <begin position="418"/>
        <end position="443"/>
    </location>
</feature>
<feature type="topological domain" description="Extracellular" evidence="3">
    <location>
        <begin position="444"/>
        <end position="459"/>
    </location>
</feature>
<feature type="transmembrane region" description="Helical; Name=7" evidence="3">
    <location>
        <begin position="460"/>
        <end position="481"/>
    </location>
</feature>
<feature type="topological domain" description="Cytoplasmic" evidence="3">
    <location>
        <begin position="482"/>
        <end position="523"/>
    </location>
</feature>
<feature type="domain" description="FZ" evidence="5">
    <location>
        <begin position="26"/>
        <end position="147"/>
    </location>
</feature>
<feature type="short sequence motif" description="Lys-Thr-X-X-X-Trp motif, mediates interaction with the PDZ domain of Dvl family members" evidence="1">
    <location>
        <begin position="485"/>
        <end position="490"/>
    </location>
</feature>
<feature type="short sequence motif" description="PDZ-binding">
    <location>
        <begin position="521"/>
        <end position="523"/>
    </location>
</feature>
<feature type="glycosylation site" description="N-linked (GlcNAc...) asparagine" evidence="4">
    <location>
        <position position="45"/>
    </location>
</feature>
<feature type="glycosylation site" description="N-linked (GlcNAc...) asparagine" evidence="4">
    <location>
        <position position="130"/>
    </location>
</feature>
<feature type="disulfide bond" evidence="5">
    <location>
        <begin position="31"/>
        <end position="92"/>
    </location>
</feature>
<feature type="disulfide bond" evidence="5">
    <location>
        <begin position="39"/>
        <end position="85"/>
    </location>
</feature>
<feature type="disulfide bond" evidence="5">
    <location>
        <begin position="76"/>
        <end position="114"/>
    </location>
</feature>
<feature type="disulfide bond" evidence="5">
    <location>
        <begin position="103"/>
        <end position="144"/>
    </location>
</feature>
<feature type="disulfide bond" evidence="5">
    <location>
        <begin position="107"/>
        <end position="131"/>
    </location>
</feature>
<feature type="disulfide bond" evidence="3">
    <location>
        <begin position="167"/>
        <end position="186"/>
    </location>
</feature>
<feature type="disulfide bond" evidence="3">
    <location>
        <begin position="190"/>
        <end position="268"/>
    </location>
</feature>
<feature type="disulfide bond" evidence="3">
    <location>
        <begin position="288"/>
        <end position="363"/>
    </location>
</feature>
<keyword id="KW-1003">Cell membrane</keyword>
<keyword id="KW-0217">Developmental protein</keyword>
<keyword id="KW-1015">Disulfide bond</keyword>
<keyword id="KW-0297">G-protein coupled receptor</keyword>
<keyword id="KW-0325">Glycoprotein</keyword>
<keyword id="KW-0472">Membrane</keyword>
<keyword id="KW-0675">Receptor</keyword>
<keyword id="KW-1185">Reference proteome</keyword>
<keyword id="KW-0732">Signal</keyword>
<keyword id="KW-0807">Transducer</keyword>
<keyword id="KW-0812">Transmembrane</keyword>
<keyword id="KW-1133">Transmembrane helix</keyword>
<keyword id="KW-0879">Wnt signaling pathway</keyword>
<name>FZD4_XENLA</name>
<sequence length="523" mass="58741">MGARSLTLLYLLCCLVVGLIAGFGEEEERSCDPIRITMCQNLGYNVTKMPNLVGHELQADAELQLTTFTPLIQYGCSSQLQFFLCSVYVPMCTEKINIPIGPCGGMCLSVKRRCEPVLKEFGFAWPESLNCSKFPPQNDHNHMCMEGPGDDEVPAHSKTPVLPGEDCNSFGPNSDQYTWVKRSMNCVLKCGYDSGLYNRLSKEFTDIWMAVWASLCFISTAFTVLTFLIDSSRFCYPERPIIFLSMCYNIYSIAYIVRLTVGRERISCDFEEAAEPVLIQEGLKNTGCAIIFLLMYFFGMASSIWWVILTLTWFLAAGLKWGHEAIEMHSSYFHIAAWAIPAVKTIVILIMRLVDADELTGLCYVGNQNIDALTGFVVAPLFTYLVIGTLFIAAGLVALFKIRSNLQKDGTKTDKLERLMVKIGVFSVLYTVPATCVIACYFYEVSNWNVFRYTADDSNMAVEMLNIFMSLLVGITSGMWIWSAKTLHTWQKCTNRLVNSGKVKRKKRVDGWVKPGKGNETVV</sequence>
<comment type="function">
    <text>Receptor for Wnt proteins. Most frizzled receptors are coupled to the beta-catenin canonical signaling pathway, which leads to the activation of disheveled proteins, inhibition of GSK-3 kinase, nuclear accumulation of beta-catenin and activation of Wnt target genes. A second signaling pathway involving PKC and calcium fluxes has been seen for some family members, but it is not yet clear if it represents a distinct pathway or if it can be integrated in the canonical pathway, as PKC seems to be required for Wnt-mediated inactivation of GSK-3 kinase. Both pathways seem to involve interactions with G-proteins. May be involved in transduction and intercellular transmission of polarity information during tissue morphogenesis and/or in differentiated tissues. Activated by Wnt5A.</text>
</comment>
<comment type="subunit">
    <text evidence="2">Interacts (via FZ domain) with tsku; tsku competes with wnt2b for binding to fzd4, inhibiting Wnt signaling and repressing peripheral eye development.</text>
</comment>
<comment type="subcellular location">
    <subcellularLocation>
        <location evidence="3">Cell membrane</location>
        <topology evidence="4">Multi-pass membrane protein</topology>
    </subcellularLocation>
</comment>
<comment type="developmental stage">
    <text>Expression level remains constant during early development. First localized during gastrulation to the dorsal presumptive neuroectoderm. At the end of gastrulation, detected in the dorso-anterior neuroectoderm. During neurulation, expressed as a band on both sides of the forebrain, and in the trunk lateral plate mesoderm. As development proceeds, expression in the trunk lateral plate mesoderm decreases but persists in the forebrain. Also expressed in the posterior unsegmented somitic mesoderm from late tail-bud stage onward.</text>
</comment>
<comment type="domain">
    <text>Lys-Thr-X-X-X-Trp motif interacts with the PDZ domain of Dvl (Disheveled) family members and is involved in the activation of the Wnt/beta-catenin signaling pathway.</text>
</comment>
<comment type="domain">
    <text evidence="1">The FZ domain is involved in binding with Wnt ligands.</text>
</comment>
<comment type="similarity">
    <text evidence="6">Belongs to the G-protein coupled receptor Fz/Smo family.</text>
</comment>
<proteinExistence type="evidence at transcript level"/>
<protein>
    <recommendedName>
        <fullName>Frizzled-4</fullName>
        <shortName>Fz-4</shortName>
        <shortName>Xfz4</shortName>
    </recommendedName>
</protein>
<gene>
    <name type="primary">fzd4</name>
    <name type="synonym">fz4</name>
</gene>
<dbReference type="EMBL" id="AJ251750">
    <property type="protein sequence ID" value="CAB63117.1"/>
    <property type="molecule type" value="mRNA"/>
</dbReference>
<dbReference type="RefSeq" id="NP_001083922.1">
    <property type="nucleotide sequence ID" value="NM_001090453.1"/>
</dbReference>
<dbReference type="SMR" id="Q9PT62"/>
<dbReference type="GlyCosmos" id="Q9PT62">
    <property type="glycosylation" value="2 sites, No reported glycans"/>
</dbReference>
<dbReference type="GeneID" id="399192"/>
<dbReference type="KEGG" id="xla:399192"/>
<dbReference type="AGR" id="Xenbase:XB-GENE-865153"/>
<dbReference type="CTD" id="399192"/>
<dbReference type="Xenbase" id="XB-GENE-865153">
    <property type="gene designation" value="fzd4.S"/>
</dbReference>
<dbReference type="OrthoDB" id="5959102at2759"/>
<dbReference type="Proteomes" id="UP000186698">
    <property type="component" value="Chromosome 2S"/>
</dbReference>
<dbReference type="Bgee" id="399192">
    <property type="expression patterns" value="Expressed in internal ear and 18 other cell types or tissues"/>
</dbReference>
<dbReference type="GO" id="GO:0009986">
    <property type="term" value="C:cell surface"/>
    <property type="evidence" value="ECO:0000266"/>
    <property type="project" value="AgBase"/>
</dbReference>
<dbReference type="GO" id="GO:0005911">
    <property type="term" value="C:cell-cell junction"/>
    <property type="evidence" value="ECO:0000266"/>
    <property type="project" value="AgBase"/>
</dbReference>
<dbReference type="GO" id="GO:0070062">
    <property type="term" value="C:extracellular exosome"/>
    <property type="evidence" value="ECO:0000266"/>
    <property type="project" value="AgBase"/>
</dbReference>
<dbReference type="GO" id="GO:0005886">
    <property type="term" value="C:plasma membrane"/>
    <property type="evidence" value="ECO:0000250"/>
    <property type="project" value="UniProtKB"/>
</dbReference>
<dbReference type="GO" id="GO:0019955">
    <property type="term" value="F:cytokine binding"/>
    <property type="evidence" value="ECO:0000266"/>
    <property type="project" value="AgBase"/>
</dbReference>
<dbReference type="GO" id="GO:0004930">
    <property type="term" value="F:G protein-coupled receptor activity"/>
    <property type="evidence" value="ECO:0007669"/>
    <property type="project" value="UniProtKB-KW"/>
</dbReference>
<dbReference type="GO" id="GO:0030165">
    <property type="term" value="F:PDZ domain binding"/>
    <property type="evidence" value="ECO:0000266"/>
    <property type="project" value="AgBase"/>
</dbReference>
<dbReference type="GO" id="GO:0046982">
    <property type="term" value="F:protein heterodimerization activity"/>
    <property type="evidence" value="ECO:0000266"/>
    <property type="project" value="AgBase"/>
</dbReference>
<dbReference type="GO" id="GO:0042803">
    <property type="term" value="F:protein homodimerization activity"/>
    <property type="evidence" value="ECO:0000266"/>
    <property type="project" value="AgBase"/>
</dbReference>
<dbReference type="GO" id="GO:0031625">
    <property type="term" value="F:ubiquitin protein ligase binding"/>
    <property type="evidence" value="ECO:0000266"/>
    <property type="project" value="AgBase"/>
</dbReference>
<dbReference type="GO" id="GO:0042813">
    <property type="term" value="F:Wnt receptor activity"/>
    <property type="evidence" value="ECO:0000266"/>
    <property type="project" value="AgBase"/>
</dbReference>
<dbReference type="GO" id="GO:0017147">
    <property type="term" value="F:Wnt-protein binding"/>
    <property type="evidence" value="ECO:0000266"/>
    <property type="project" value="AgBase"/>
</dbReference>
<dbReference type="GO" id="GO:0001568">
    <property type="term" value="P:blood vessel development"/>
    <property type="evidence" value="ECO:0000266"/>
    <property type="project" value="AgBase"/>
</dbReference>
<dbReference type="GO" id="GO:0060070">
    <property type="term" value="P:canonical Wnt signaling pathway"/>
    <property type="evidence" value="ECO:0000266"/>
    <property type="project" value="AgBase"/>
</dbReference>
<dbReference type="GO" id="GO:0061301">
    <property type="term" value="P:cerebellum vasculature morphogenesis"/>
    <property type="evidence" value="ECO:0000266"/>
    <property type="project" value="AgBase"/>
</dbReference>
<dbReference type="GO" id="GO:0035426">
    <property type="term" value="P:extracellular matrix-cell signaling"/>
    <property type="evidence" value="ECO:0000266"/>
    <property type="project" value="AgBase"/>
</dbReference>
<dbReference type="GO" id="GO:0031987">
    <property type="term" value="P:locomotion involved in locomotory behavior"/>
    <property type="evidence" value="ECO:0000266"/>
    <property type="project" value="AgBase"/>
</dbReference>
<dbReference type="GO" id="GO:0001553">
    <property type="term" value="P:luteinization"/>
    <property type="evidence" value="ECO:0000266"/>
    <property type="project" value="AgBase"/>
</dbReference>
<dbReference type="GO" id="GO:0010812">
    <property type="term" value="P:negative regulation of cell-substrate adhesion"/>
    <property type="evidence" value="ECO:0000266"/>
    <property type="project" value="AgBase"/>
</dbReference>
<dbReference type="GO" id="GO:0035567">
    <property type="term" value="P:non-canonical Wnt signaling pathway"/>
    <property type="evidence" value="ECO:0000318"/>
    <property type="project" value="GO_Central"/>
</dbReference>
<dbReference type="GO" id="GO:0051091">
    <property type="term" value="P:positive regulation of DNA-binding transcription factor activity"/>
    <property type="evidence" value="ECO:0000266"/>
    <property type="project" value="AgBase"/>
</dbReference>
<dbReference type="GO" id="GO:0045893">
    <property type="term" value="P:positive regulation of DNA-templated transcription"/>
    <property type="evidence" value="ECO:0000266"/>
    <property type="project" value="AgBase"/>
</dbReference>
<dbReference type="GO" id="GO:0043507">
    <property type="term" value="P:positive regulation of JUN kinase activity"/>
    <property type="evidence" value="ECO:0000266"/>
    <property type="project" value="AgBase"/>
</dbReference>
<dbReference type="GO" id="GO:0042701">
    <property type="term" value="P:progesterone secretion"/>
    <property type="evidence" value="ECO:0000266"/>
    <property type="project" value="AgBase"/>
</dbReference>
<dbReference type="GO" id="GO:0030947">
    <property type="term" value="P:regulation of vascular endothelial growth factor receptor signaling pathway"/>
    <property type="evidence" value="ECO:0000266"/>
    <property type="project" value="AgBase"/>
</dbReference>
<dbReference type="GO" id="GO:0061299">
    <property type="term" value="P:retina vasculature morphogenesis in camera-type eye"/>
    <property type="evidence" value="ECO:0000266"/>
    <property type="project" value="AgBase"/>
</dbReference>
<dbReference type="GO" id="GO:0061304">
    <property type="term" value="P:retinal blood vessel morphogenesis"/>
    <property type="evidence" value="ECO:0000266"/>
    <property type="project" value="AgBase"/>
</dbReference>
<dbReference type="GO" id="GO:0007605">
    <property type="term" value="P:sensory perception of sound"/>
    <property type="evidence" value="ECO:0000266"/>
    <property type="project" value="AgBase"/>
</dbReference>
<dbReference type="GO" id="GO:0034446">
    <property type="term" value="P:substrate adhesion-dependent cell spreading"/>
    <property type="evidence" value="ECO:0000266"/>
    <property type="project" value="AgBase"/>
</dbReference>
<dbReference type="GO" id="GO:0001570">
    <property type="term" value="P:vasculogenesis"/>
    <property type="evidence" value="ECO:0000266"/>
    <property type="project" value="AgBase"/>
</dbReference>
<dbReference type="GO" id="GO:0016055">
    <property type="term" value="P:Wnt signaling pathway"/>
    <property type="evidence" value="ECO:0000266"/>
    <property type="project" value="AgBase"/>
</dbReference>
<dbReference type="GO" id="GO:0007223">
    <property type="term" value="P:Wnt signaling pathway, calcium modulating pathway"/>
    <property type="evidence" value="ECO:0000266"/>
    <property type="project" value="AgBase"/>
</dbReference>
<dbReference type="CDD" id="cd15038">
    <property type="entry name" value="7tmF_FZD4"/>
    <property type="match status" value="1"/>
</dbReference>
<dbReference type="CDD" id="cd07448">
    <property type="entry name" value="CRD_FZ4"/>
    <property type="match status" value="1"/>
</dbReference>
<dbReference type="FunFam" id="1.20.1070.10:FF:000020">
    <property type="entry name" value="Frizzled class receptor 10"/>
    <property type="match status" value="1"/>
</dbReference>
<dbReference type="FunFam" id="1.10.2000.10:FF:000008">
    <property type="entry name" value="Frizzled receptor 4"/>
    <property type="match status" value="1"/>
</dbReference>
<dbReference type="Gene3D" id="1.10.2000.10">
    <property type="entry name" value="Frizzled cysteine-rich domain"/>
    <property type="match status" value="1"/>
</dbReference>
<dbReference type="Gene3D" id="1.20.1070.10">
    <property type="entry name" value="Rhodopsin 7-helix transmembrane proteins"/>
    <property type="match status" value="1"/>
</dbReference>
<dbReference type="InterPro" id="IPR015526">
    <property type="entry name" value="Frizzled/SFRP"/>
</dbReference>
<dbReference type="InterPro" id="IPR000539">
    <property type="entry name" value="Frizzled/Smoothened_7TM"/>
</dbReference>
<dbReference type="InterPro" id="IPR020067">
    <property type="entry name" value="Frizzled_dom"/>
</dbReference>
<dbReference type="InterPro" id="IPR036790">
    <property type="entry name" value="Frizzled_dom_sf"/>
</dbReference>
<dbReference type="InterPro" id="IPR041765">
    <property type="entry name" value="FZ4_CRD"/>
</dbReference>
<dbReference type="InterPro" id="IPR026551">
    <property type="entry name" value="FZD4_7TM"/>
</dbReference>
<dbReference type="InterPro" id="IPR017981">
    <property type="entry name" value="GPCR_2-like_7TM"/>
</dbReference>
<dbReference type="PANTHER" id="PTHR11309">
    <property type="entry name" value="FRIZZLED"/>
    <property type="match status" value="1"/>
</dbReference>
<dbReference type="PANTHER" id="PTHR11309:SF23">
    <property type="entry name" value="FRIZZLED-4"/>
    <property type="match status" value="1"/>
</dbReference>
<dbReference type="Pfam" id="PF01534">
    <property type="entry name" value="Frizzled"/>
    <property type="match status" value="1"/>
</dbReference>
<dbReference type="Pfam" id="PF01392">
    <property type="entry name" value="Fz"/>
    <property type="match status" value="1"/>
</dbReference>
<dbReference type="PRINTS" id="PR00489">
    <property type="entry name" value="FRIZZLED"/>
</dbReference>
<dbReference type="SMART" id="SM00063">
    <property type="entry name" value="FRI"/>
    <property type="match status" value="1"/>
</dbReference>
<dbReference type="SMART" id="SM01330">
    <property type="entry name" value="Frizzled"/>
    <property type="match status" value="1"/>
</dbReference>
<dbReference type="SUPFAM" id="SSF63501">
    <property type="entry name" value="Frizzled cysteine-rich domain"/>
    <property type="match status" value="1"/>
</dbReference>
<dbReference type="PROSITE" id="PS50038">
    <property type="entry name" value="FZ"/>
    <property type="match status" value="1"/>
</dbReference>
<dbReference type="PROSITE" id="PS50261">
    <property type="entry name" value="G_PROTEIN_RECEP_F2_4"/>
    <property type="match status" value="1"/>
</dbReference>
<evidence type="ECO:0000250" key="1"/>
<evidence type="ECO:0000250" key="2">
    <source>
        <dbReference type="UniProtKB" id="Q9IA05"/>
    </source>
</evidence>
<evidence type="ECO:0000250" key="3">
    <source>
        <dbReference type="UniProtKB" id="Q9ULV1"/>
    </source>
</evidence>
<evidence type="ECO:0000255" key="4"/>
<evidence type="ECO:0000255" key="5">
    <source>
        <dbReference type="PROSITE-ProRule" id="PRU00090"/>
    </source>
</evidence>
<evidence type="ECO:0000305" key="6"/>
<reference key="1">
    <citation type="journal article" date="2000" name="Mech. Dev.">
        <title>Xenopus frizzled 4 is a maternal mRNA and its zygotic expression is localized to the neuroectoderm and trunk lateral plate mesoderm.</title>
        <authorList>
            <person name="Shi D.-L."/>
            <person name="Boucaut J.-C."/>
        </authorList>
    </citation>
    <scope>NUCLEOTIDE SEQUENCE [MRNA]</scope>
    <source>
        <tissue>Embryo</tissue>
    </source>
</reference>
<reference key="2">
    <citation type="journal article" date="2000" name="EMBO J.">
        <title>The C-terminal cytoplasmic Lys-Thr-X-X-X-Trp motif in frizzled receptors mediates Wnt/beta-catenin signalling.</title>
        <authorList>
            <person name="Umbhauer M."/>
            <person name="Djiane A."/>
            <person name="Goisset C."/>
            <person name="Penzo-Mendez A."/>
            <person name="Riou J.-F."/>
            <person name="Boucaut J.-C."/>
            <person name="Shi D.-L."/>
        </authorList>
    </citation>
    <scope>COUPLING TO BETA-CATENIN PATHWAY</scope>
</reference>
<accession>Q9PT62</accession>